<evidence type="ECO:0000255" key="1">
    <source>
        <dbReference type="HAMAP-Rule" id="MF_00067"/>
    </source>
</evidence>
<evidence type="ECO:0000305" key="2">
    <source>
    </source>
</evidence>
<accession>O87340</accession>
<name>GMHA_HAEDU</name>
<proteinExistence type="inferred from homology"/>
<reference key="1">
    <citation type="journal article" date="1998" name="Infect. Immun.">
        <title>Involvement of the Haemophilus ducreyi gmhA gene product in lipooligosaccharide expression and virulence.</title>
        <authorList>
            <person name="Bauer B.A."/>
            <person name="Stevens M.K."/>
            <person name="Hansen E.J."/>
        </authorList>
    </citation>
    <scope>NUCLEOTIDE SEQUENCE [GENOMIC DNA]</scope>
    <scope>ROLE IN LOS BIOSYNTHESIS</scope>
    <source>
        <strain>35000HP / ATCC 700724</strain>
    </source>
</reference>
<reference key="2">
    <citation type="submission" date="2003-06" db="EMBL/GenBank/DDBJ databases">
        <title>The complete genome sequence of Haemophilus ducreyi.</title>
        <authorList>
            <person name="Munson R.S. Jr."/>
            <person name="Ray W.C."/>
            <person name="Mahairas G."/>
            <person name="Sabo P."/>
            <person name="Mungur R."/>
            <person name="Johnson L."/>
            <person name="Nguyen D."/>
            <person name="Wang J."/>
            <person name="Forst C."/>
            <person name="Hood L."/>
        </authorList>
    </citation>
    <scope>NUCLEOTIDE SEQUENCE [LARGE SCALE GENOMIC DNA]</scope>
    <source>
        <strain>35000HP / ATCC 700724</strain>
    </source>
</reference>
<comment type="function">
    <text evidence="2">Catalyzes the isomerization of sedoheptulose 7-phosphate in D-glycero-D-manno-heptose 7-phosphate.</text>
</comment>
<comment type="catalytic activity">
    <reaction evidence="1">
        <text>2 D-sedoheptulose 7-phosphate = D-glycero-alpha-D-manno-heptose 7-phosphate + D-glycero-beta-D-manno-heptose 7-phosphate</text>
        <dbReference type="Rhea" id="RHEA:27489"/>
        <dbReference type="ChEBI" id="CHEBI:57483"/>
        <dbReference type="ChEBI" id="CHEBI:60203"/>
        <dbReference type="ChEBI" id="CHEBI:60204"/>
        <dbReference type="EC" id="5.3.1.28"/>
    </reaction>
</comment>
<comment type="cofactor">
    <cofactor evidence="1">
        <name>Zn(2+)</name>
        <dbReference type="ChEBI" id="CHEBI:29105"/>
    </cofactor>
    <text evidence="1">Binds 1 zinc ion per subunit.</text>
</comment>
<comment type="pathway">
    <text evidence="1">Carbohydrate biosynthesis; D-glycero-D-manno-heptose 7-phosphate biosynthesis; D-glycero-alpha-D-manno-heptose 7-phosphate and D-glycero-beta-D-manno-heptose 7-phosphate from sedoheptulose 7-phosphate: step 1/1.</text>
</comment>
<comment type="pathway">
    <text>Bacterial outer membrane biogenesis; LOS core biosynthesis.</text>
</comment>
<comment type="subunit">
    <text evidence="1">Homotetramer.</text>
</comment>
<comment type="subcellular location">
    <subcellularLocation>
        <location evidence="1">Cytoplasm</location>
    </subcellularLocation>
</comment>
<comment type="miscellaneous">
    <text evidence="1">The reaction produces a racemic mixture of D-glycero-alpha-D-manno-heptose 7-phosphate and D-glycero-beta-D-manno-heptose 7-phosphate.</text>
</comment>
<comment type="similarity">
    <text evidence="1">Belongs to the SIS family. GmhA subfamily.</text>
</comment>
<feature type="chain" id="PRO_0000136530" description="Phosphoheptose isomerase">
    <location>
        <begin position="1"/>
        <end position="194"/>
    </location>
</feature>
<feature type="domain" description="SIS" evidence="1">
    <location>
        <begin position="37"/>
        <end position="194"/>
    </location>
</feature>
<feature type="binding site" evidence="1">
    <location>
        <begin position="52"/>
        <end position="54"/>
    </location>
    <ligand>
        <name>substrate</name>
    </ligand>
</feature>
<feature type="binding site" evidence="1">
    <location>
        <position position="61"/>
    </location>
    <ligand>
        <name>Zn(2+)</name>
        <dbReference type="ChEBI" id="CHEBI:29105"/>
    </ligand>
</feature>
<feature type="binding site" evidence="1">
    <location>
        <position position="65"/>
    </location>
    <ligand>
        <name>substrate</name>
    </ligand>
</feature>
<feature type="binding site" evidence="1">
    <location>
        <position position="65"/>
    </location>
    <ligand>
        <name>Zn(2+)</name>
        <dbReference type="ChEBI" id="CHEBI:29105"/>
    </ligand>
</feature>
<feature type="binding site" evidence="1">
    <location>
        <begin position="93"/>
        <end position="94"/>
    </location>
    <ligand>
        <name>substrate</name>
    </ligand>
</feature>
<feature type="binding site" evidence="1">
    <location>
        <begin position="119"/>
        <end position="121"/>
    </location>
    <ligand>
        <name>substrate</name>
    </ligand>
</feature>
<feature type="binding site" evidence="1">
    <location>
        <position position="124"/>
    </location>
    <ligand>
        <name>substrate</name>
    </ligand>
</feature>
<feature type="binding site" evidence="1">
    <location>
        <position position="172"/>
    </location>
    <ligand>
        <name>substrate</name>
    </ligand>
</feature>
<feature type="binding site" evidence="1">
    <location>
        <position position="172"/>
    </location>
    <ligand>
        <name>Zn(2+)</name>
        <dbReference type="ChEBI" id="CHEBI:29105"/>
    </ligand>
</feature>
<feature type="binding site" evidence="1">
    <location>
        <position position="180"/>
    </location>
    <ligand>
        <name>Zn(2+)</name>
        <dbReference type="ChEBI" id="CHEBI:29105"/>
    </ligand>
</feature>
<sequence length="194" mass="21304">MYLEQIKGELQEAADVLAKFMADEKNIQLIQEAALLIANSFKQGGKVLSCGNGGSHCDAMHFAEELTGRYRENRPAYPAIAISDVSHLSCVSNDFGYEYVFSRYIEAVGQTGDVLFGLSTSGNSKNVLNAINIAKEKGMKVIALTGKDGGQMAGLADVEIRVPHFRYADRTQEIHIKVIHILMMLIEFEMAKTA</sequence>
<keyword id="KW-0119">Carbohydrate metabolism</keyword>
<keyword id="KW-0963">Cytoplasm</keyword>
<keyword id="KW-0413">Isomerase</keyword>
<keyword id="KW-0479">Metal-binding</keyword>
<keyword id="KW-1185">Reference proteome</keyword>
<keyword id="KW-0862">Zinc</keyword>
<gene>
    <name evidence="1" type="primary">gmhA</name>
    <name type="synonym">lpcA</name>
    <name type="ordered locus">HD_1228</name>
</gene>
<protein>
    <recommendedName>
        <fullName evidence="1">Phosphoheptose isomerase</fullName>
        <ecNumber evidence="1">5.3.1.28</ecNumber>
    </recommendedName>
    <alternativeName>
        <fullName evidence="1">Sedoheptulose 7-phosphate isomerase</fullName>
    </alternativeName>
</protein>
<organism>
    <name type="scientific">Haemophilus ducreyi (strain 35000HP / ATCC 700724)</name>
    <dbReference type="NCBI Taxonomy" id="233412"/>
    <lineage>
        <taxon>Bacteria</taxon>
        <taxon>Pseudomonadati</taxon>
        <taxon>Pseudomonadota</taxon>
        <taxon>Gammaproteobacteria</taxon>
        <taxon>Pasteurellales</taxon>
        <taxon>Pasteurellaceae</taxon>
        <taxon>Haemophilus</taxon>
    </lineage>
</organism>
<dbReference type="EC" id="5.3.1.28" evidence="1"/>
<dbReference type="EMBL" id="AF045156">
    <property type="protein sequence ID" value="AAC34994.1"/>
    <property type="molecule type" value="Genomic_DNA"/>
</dbReference>
<dbReference type="EMBL" id="AE017143">
    <property type="protein sequence ID" value="AAP96066.1"/>
    <property type="molecule type" value="Genomic_DNA"/>
</dbReference>
<dbReference type="RefSeq" id="WP_010945115.1">
    <property type="nucleotide sequence ID" value="NC_002940.2"/>
</dbReference>
<dbReference type="SMR" id="O87340"/>
<dbReference type="STRING" id="233412.HD_1228"/>
<dbReference type="KEGG" id="hdu:HD_1228"/>
<dbReference type="eggNOG" id="COG0279">
    <property type="taxonomic scope" value="Bacteria"/>
</dbReference>
<dbReference type="HOGENOM" id="CLU_080999_4_0_6"/>
<dbReference type="OrthoDB" id="9810929at2"/>
<dbReference type="BRENDA" id="5.3.1.28">
    <property type="organism ID" value="2526"/>
</dbReference>
<dbReference type="UniPathway" id="UPA00041">
    <property type="reaction ID" value="UER00436"/>
</dbReference>
<dbReference type="UniPathway" id="UPA00976"/>
<dbReference type="Proteomes" id="UP000001022">
    <property type="component" value="Chromosome"/>
</dbReference>
<dbReference type="GO" id="GO:0005737">
    <property type="term" value="C:cytoplasm"/>
    <property type="evidence" value="ECO:0007669"/>
    <property type="project" value="UniProtKB-SubCell"/>
</dbReference>
<dbReference type="GO" id="GO:0097367">
    <property type="term" value="F:carbohydrate derivative binding"/>
    <property type="evidence" value="ECO:0007669"/>
    <property type="project" value="InterPro"/>
</dbReference>
<dbReference type="GO" id="GO:0008968">
    <property type="term" value="F:D-sedoheptulose 7-phosphate isomerase activity"/>
    <property type="evidence" value="ECO:0007669"/>
    <property type="project" value="UniProtKB-UniRule"/>
</dbReference>
<dbReference type="GO" id="GO:0008270">
    <property type="term" value="F:zinc ion binding"/>
    <property type="evidence" value="ECO:0007669"/>
    <property type="project" value="UniProtKB-UniRule"/>
</dbReference>
<dbReference type="GO" id="GO:0005975">
    <property type="term" value="P:carbohydrate metabolic process"/>
    <property type="evidence" value="ECO:0007669"/>
    <property type="project" value="UniProtKB-UniRule"/>
</dbReference>
<dbReference type="GO" id="GO:2001061">
    <property type="term" value="P:D-glycero-D-manno-heptose 7-phosphate biosynthetic process"/>
    <property type="evidence" value="ECO:0007669"/>
    <property type="project" value="UniProtKB-UniPathway"/>
</dbReference>
<dbReference type="CDD" id="cd05006">
    <property type="entry name" value="SIS_GmhA"/>
    <property type="match status" value="1"/>
</dbReference>
<dbReference type="Gene3D" id="3.40.50.10490">
    <property type="entry name" value="Glucose-6-phosphate isomerase like protein, domain 1"/>
    <property type="match status" value="1"/>
</dbReference>
<dbReference type="HAMAP" id="MF_00067">
    <property type="entry name" value="GmhA"/>
    <property type="match status" value="1"/>
</dbReference>
<dbReference type="InterPro" id="IPR035461">
    <property type="entry name" value="GmhA/DiaA"/>
</dbReference>
<dbReference type="InterPro" id="IPR004515">
    <property type="entry name" value="Phosphoheptose_Isoase"/>
</dbReference>
<dbReference type="InterPro" id="IPR001347">
    <property type="entry name" value="SIS_dom"/>
</dbReference>
<dbReference type="InterPro" id="IPR046348">
    <property type="entry name" value="SIS_dom_sf"/>
</dbReference>
<dbReference type="InterPro" id="IPR050099">
    <property type="entry name" value="SIS_GmhA/DiaA_subfam"/>
</dbReference>
<dbReference type="NCBIfam" id="TIGR00441">
    <property type="entry name" value="gmhA"/>
    <property type="match status" value="1"/>
</dbReference>
<dbReference type="NCBIfam" id="NF001628">
    <property type="entry name" value="PRK00414.1"/>
    <property type="match status" value="1"/>
</dbReference>
<dbReference type="PANTHER" id="PTHR30390:SF7">
    <property type="entry name" value="PHOSPHOHEPTOSE ISOMERASE"/>
    <property type="match status" value="1"/>
</dbReference>
<dbReference type="PANTHER" id="PTHR30390">
    <property type="entry name" value="SEDOHEPTULOSE 7-PHOSPHATE ISOMERASE / DNAA INITIATOR-ASSOCIATING FACTOR FOR REPLICATION INITIATION"/>
    <property type="match status" value="1"/>
</dbReference>
<dbReference type="Pfam" id="PF13580">
    <property type="entry name" value="SIS_2"/>
    <property type="match status" value="1"/>
</dbReference>
<dbReference type="SUPFAM" id="SSF53697">
    <property type="entry name" value="SIS domain"/>
    <property type="match status" value="1"/>
</dbReference>
<dbReference type="PROSITE" id="PS51464">
    <property type="entry name" value="SIS"/>
    <property type="match status" value="1"/>
</dbReference>